<organism>
    <name type="scientific">Mus musculus</name>
    <name type="common">Mouse</name>
    <dbReference type="NCBI Taxonomy" id="10090"/>
    <lineage>
        <taxon>Eukaryota</taxon>
        <taxon>Metazoa</taxon>
        <taxon>Chordata</taxon>
        <taxon>Craniata</taxon>
        <taxon>Vertebrata</taxon>
        <taxon>Euteleostomi</taxon>
        <taxon>Mammalia</taxon>
        <taxon>Eutheria</taxon>
        <taxon>Euarchontoglires</taxon>
        <taxon>Glires</taxon>
        <taxon>Rodentia</taxon>
        <taxon>Myomorpha</taxon>
        <taxon>Muroidea</taxon>
        <taxon>Muridae</taxon>
        <taxon>Murinae</taxon>
        <taxon>Mus</taxon>
        <taxon>Mus</taxon>
    </lineage>
</organism>
<protein>
    <recommendedName>
        <fullName evidence="5">Fmr1 neighbor protein</fullName>
    </recommendedName>
    <alternativeName>
        <fullName>Protein mNY-SAR-35</fullName>
    </alternativeName>
</protein>
<accession>Q80ZA7</accession>
<accession>B2RQU9</accession>
<accession>Q4KL61</accession>
<accession>Q8BPD4</accession>
<name>FMR1N_MOUSE</name>
<keyword id="KW-0025">Alternative splicing</keyword>
<keyword id="KW-0472">Membrane</keyword>
<keyword id="KW-1185">Reference proteome</keyword>
<keyword id="KW-0812">Transmembrane</keyword>
<keyword id="KW-1133">Transmembrane helix</keyword>
<feature type="chain" id="PRO_0000281736" description="Fmr1 neighbor protein">
    <location>
        <begin position="1"/>
        <end position="238"/>
    </location>
</feature>
<feature type="topological domain" description="Cytoplasmic" evidence="1">
    <location>
        <begin position="1"/>
        <end position="79"/>
    </location>
</feature>
<feature type="transmembrane region" description="Helical" evidence="1">
    <location>
        <begin position="80"/>
        <end position="100"/>
    </location>
</feature>
<feature type="topological domain" description="Extracellular" evidence="1">
    <location>
        <begin position="101"/>
        <end position="178"/>
    </location>
</feature>
<feature type="transmembrane region" description="Helical" evidence="1">
    <location>
        <begin position="179"/>
        <end position="199"/>
    </location>
</feature>
<feature type="topological domain" description="Cytoplasmic" evidence="1">
    <location>
        <begin position="200"/>
        <end position="238"/>
    </location>
</feature>
<feature type="domain" description="P-type">
    <location>
        <begin position="118"/>
        <end position="176"/>
    </location>
</feature>
<feature type="region of interest" description="Disordered" evidence="2">
    <location>
        <begin position="1"/>
        <end position="30"/>
    </location>
</feature>
<feature type="region of interest" description="Disordered" evidence="2">
    <location>
        <begin position="214"/>
        <end position="238"/>
    </location>
</feature>
<feature type="compositionally biased region" description="Basic and acidic residues" evidence="2">
    <location>
        <begin position="15"/>
        <end position="30"/>
    </location>
</feature>
<feature type="compositionally biased region" description="Basic residues" evidence="2">
    <location>
        <begin position="214"/>
        <end position="227"/>
    </location>
</feature>
<feature type="compositionally biased region" description="Basic and acidic residues" evidence="2">
    <location>
        <begin position="228"/>
        <end position="238"/>
    </location>
</feature>
<feature type="splice variant" id="VSP_024024" description="In isoform 2." evidence="3 4">
    <location>
        <begin position="126"/>
        <end position="171"/>
    </location>
</feature>
<feature type="sequence conflict" description="In Ref. 2; BAC36243." evidence="5" ref="2">
    <original>E</original>
    <variation>K</variation>
    <location>
        <position position="232"/>
    </location>
</feature>
<dbReference type="EMBL" id="AY214130">
    <property type="protein sequence ID" value="AAO59491.1"/>
    <property type="molecule type" value="mRNA"/>
</dbReference>
<dbReference type="EMBL" id="AK076190">
    <property type="protein sequence ID" value="BAC36243.1"/>
    <property type="molecule type" value="mRNA"/>
</dbReference>
<dbReference type="EMBL" id="BC099411">
    <property type="protein sequence ID" value="AAH99411.1"/>
    <property type="molecule type" value="mRNA"/>
</dbReference>
<dbReference type="EMBL" id="BC138087">
    <property type="protein sequence ID" value="AAI38088.1"/>
    <property type="molecule type" value="mRNA"/>
</dbReference>
<dbReference type="EMBL" id="BC171923">
    <property type="protein sequence ID" value="AAI71923.1"/>
    <property type="molecule type" value="mRNA"/>
</dbReference>
<dbReference type="CCDS" id="CCDS30172.1">
    <molecule id="Q80ZA7-1"/>
</dbReference>
<dbReference type="CCDS" id="CCDS53084.1">
    <molecule id="Q80ZA7-2"/>
</dbReference>
<dbReference type="RefSeq" id="NP_001160091.1">
    <molecule id="Q80ZA7-2"/>
    <property type="nucleotide sequence ID" value="NM_001166619.2"/>
</dbReference>
<dbReference type="RefSeq" id="NP_001160092.1">
    <property type="nucleotide sequence ID" value="NM_001166620.1"/>
</dbReference>
<dbReference type="RefSeq" id="NP_778158.2">
    <property type="nucleotide sequence ID" value="NM_174993.2"/>
</dbReference>
<dbReference type="SMR" id="Q80ZA7"/>
<dbReference type="BioGRID" id="228930">
    <property type="interactions" value="2"/>
</dbReference>
<dbReference type="FunCoup" id="Q80ZA7">
    <property type="interactions" value="2"/>
</dbReference>
<dbReference type="STRING" id="10090.ENSMUSP00000071748"/>
<dbReference type="iPTMnet" id="Q80ZA7"/>
<dbReference type="PhosphoSitePlus" id="Q80ZA7"/>
<dbReference type="PaxDb" id="10090-ENSMUSP00000071748"/>
<dbReference type="Antibodypedia" id="549">
    <property type="antibodies" value="110 antibodies from 23 providers"/>
</dbReference>
<dbReference type="DNASU" id="207854"/>
<dbReference type="Ensembl" id="ENSMUST00000069731.12">
    <molecule id="Q80ZA7-2"/>
    <property type="protein sequence ID" value="ENSMUSP00000064543.6"/>
    <property type="gene ID" value="ENSMUSG00000062170.13"/>
</dbReference>
<dbReference type="GeneID" id="207854"/>
<dbReference type="KEGG" id="mmu:207854"/>
<dbReference type="UCSC" id="uc012hji.1">
    <molecule id="Q80ZA7-2"/>
    <property type="organism name" value="mouse"/>
</dbReference>
<dbReference type="AGR" id="MGI:2672032"/>
<dbReference type="CTD" id="158521"/>
<dbReference type="MGI" id="MGI:2672032">
    <property type="gene designation" value="Fmr1nb"/>
</dbReference>
<dbReference type="VEuPathDB" id="HostDB:ENSMUSG00000062170"/>
<dbReference type="eggNOG" id="ENOG502SB9N">
    <property type="taxonomic scope" value="Eukaryota"/>
</dbReference>
<dbReference type="GeneTree" id="ENSGT00390000007953"/>
<dbReference type="InParanoid" id="Q80ZA7"/>
<dbReference type="OrthoDB" id="9837391at2759"/>
<dbReference type="BioGRID-ORCS" id="207854">
    <property type="hits" value="1 hit in 77 CRISPR screens"/>
</dbReference>
<dbReference type="ChiTaRS" id="Fmr1nb">
    <property type="organism name" value="mouse"/>
</dbReference>
<dbReference type="PRO" id="PR:Q80ZA7"/>
<dbReference type="Proteomes" id="UP000000589">
    <property type="component" value="Chromosome X"/>
</dbReference>
<dbReference type="RNAct" id="Q80ZA7">
    <property type="molecule type" value="protein"/>
</dbReference>
<dbReference type="Bgee" id="ENSMUSG00000062170">
    <property type="expression patterns" value="Expressed in placenta labyrinth and 40 other cell types or tissues"/>
</dbReference>
<dbReference type="ExpressionAtlas" id="Q80ZA7">
    <property type="expression patterns" value="baseline and differential"/>
</dbReference>
<dbReference type="GO" id="GO:0016020">
    <property type="term" value="C:membrane"/>
    <property type="evidence" value="ECO:0007669"/>
    <property type="project" value="UniProtKB-SubCell"/>
</dbReference>
<dbReference type="InterPro" id="IPR055331">
    <property type="entry name" value="FMR1-like"/>
</dbReference>
<dbReference type="PANTHER" id="PTHR37360:SF1">
    <property type="entry name" value="FMR1 NEIGHBOR PROTEIN"/>
    <property type="match status" value="1"/>
</dbReference>
<dbReference type="PANTHER" id="PTHR37360">
    <property type="entry name" value="FRAGILE X MENTAL RETARDATION 1 NEIGHBOR PROTEIN"/>
    <property type="match status" value="1"/>
</dbReference>
<proteinExistence type="evidence at transcript level"/>
<evidence type="ECO:0000255" key="1"/>
<evidence type="ECO:0000256" key="2">
    <source>
        <dbReference type="SAM" id="MobiDB-lite"/>
    </source>
</evidence>
<evidence type="ECO:0000303" key="3">
    <source>
    </source>
</evidence>
<evidence type="ECO:0000303" key="4">
    <source>
    </source>
</evidence>
<evidence type="ECO:0000305" key="5"/>
<evidence type="ECO:0000312" key="6">
    <source>
        <dbReference type="MGI" id="MGI:2672032"/>
    </source>
</evidence>
<comment type="subcellular location">
    <subcellularLocation>
        <location evidence="5">Membrane</location>
        <topology evidence="5">Multi-pass membrane protein</topology>
    </subcellularLocation>
</comment>
<comment type="alternative products">
    <event type="alternative splicing"/>
    <isoform>
        <id>Q80ZA7-1</id>
        <name>1</name>
        <sequence type="displayed"/>
    </isoform>
    <isoform>
        <id>Q80ZA7-2</id>
        <name>2</name>
        <sequence type="described" ref="VSP_024024"/>
    </isoform>
</comment>
<reference key="1">
    <citation type="journal article" date="2003" name="Proc. Natl. Acad. Sci. U.S.A.">
        <title>Immunomic analysis of human sarcoma.</title>
        <authorList>
            <person name="Lee S.-Y."/>
            <person name="Obata Y."/>
            <person name="Yoshida M."/>
            <person name="Stockert E."/>
            <person name="Williamson B."/>
            <person name="Jungbluth A.A."/>
            <person name="Chen Y.-T."/>
            <person name="Old L.J."/>
            <person name="Scanlan M.J."/>
        </authorList>
    </citation>
    <scope>NUCLEOTIDE SEQUENCE [MRNA] (ISOFORM 1)</scope>
    <source>
        <strain>BALB/cJ</strain>
        <tissue>Testis</tissue>
    </source>
</reference>
<reference key="2">
    <citation type="journal article" date="2005" name="Science">
        <title>The transcriptional landscape of the mammalian genome.</title>
        <authorList>
            <person name="Carninci P."/>
            <person name="Kasukawa T."/>
            <person name="Katayama S."/>
            <person name="Gough J."/>
            <person name="Frith M.C."/>
            <person name="Maeda N."/>
            <person name="Oyama R."/>
            <person name="Ravasi T."/>
            <person name="Lenhard B."/>
            <person name="Wells C."/>
            <person name="Kodzius R."/>
            <person name="Shimokawa K."/>
            <person name="Bajic V.B."/>
            <person name="Brenner S.E."/>
            <person name="Batalov S."/>
            <person name="Forrest A.R."/>
            <person name="Zavolan M."/>
            <person name="Davis M.J."/>
            <person name="Wilming L.G."/>
            <person name="Aidinis V."/>
            <person name="Allen J.E."/>
            <person name="Ambesi-Impiombato A."/>
            <person name="Apweiler R."/>
            <person name="Aturaliya R.N."/>
            <person name="Bailey T.L."/>
            <person name="Bansal M."/>
            <person name="Baxter L."/>
            <person name="Beisel K.W."/>
            <person name="Bersano T."/>
            <person name="Bono H."/>
            <person name="Chalk A.M."/>
            <person name="Chiu K.P."/>
            <person name="Choudhary V."/>
            <person name="Christoffels A."/>
            <person name="Clutterbuck D.R."/>
            <person name="Crowe M.L."/>
            <person name="Dalla E."/>
            <person name="Dalrymple B.P."/>
            <person name="de Bono B."/>
            <person name="Della Gatta G."/>
            <person name="di Bernardo D."/>
            <person name="Down T."/>
            <person name="Engstrom P."/>
            <person name="Fagiolini M."/>
            <person name="Faulkner G."/>
            <person name="Fletcher C.F."/>
            <person name="Fukushima T."/>
            <person name="Furuno M."/>
            <person name="Futaki S."/>
            <person name="Gariboldi M."/>
            <person name="Georgii-Hemming P."/>
            <person name="Gingeras T.R."/>
            <person name="Gojobori T."/>
            <person name="Green R.E."/>
            <person name="Gustincich S."/>
            <person name="Harbers M."/>
            <person name="Hayashi Y."/>
            <person name="Hensch T.K."/>
            <person name="Hirokawa N."/>
            <person name="Hill D."/>
            <person name="Huminiecki L."/>
            <person name="Iacono M."/>
            <person name="Ikeo K."/>
            <person name="Iwama A."/>
            <person name="Ishikawa T."/>
            <person name="Jakt M."/>
            <person name="Kanapin A."/>
            <person name="Katoh M."/>
            <person name="Kawasawa Y."/>
            <person name="Kelso J."/>
            <person name="Kitamura H."/>
            <person name="Kitano H."/>
            <person name="Kollias G."/>
            <person name="Krishnan S.P."/>
            <person name="Kruger A."/>
            <person name="Kummerfeld S.K."/>
            <person name="Kurochkin I.V."/>
            <person name="Lareau L.F."/>
            <person name="Lazarevic D."/>
            <person name="Lipovich L."/>
            <person name="Liu J."/>
            <person name="Liuni S."/>
            <person name="McWilliam S."/>
            <person name="Madan Babu M."/>
            <person name="Madera M."/>
            <person name="Marchionni L."/>
            <person name="Matsuda H."/>
            <person name="Matsuzawa S."/>
            <person name="Miki H."/>
            <person name="Mignone F."/>
            <person name="Miyake S."/>
            <person name="Morris K."/>
            <person name="Mottagui-Tabar S."/>
            <person name="Mulder N."/>
            <person name="Nakano N."/>
            <person name="Nakauchi H."/>
            <person name="Ng P."/>
            <person name="Nilsson R."/>
            <person name="Nishiguchi S."/>
            <person name="Nishikawa S."/>
            <person name="Nori F."/>
            <person name="Ohara O."/>
            <person name="Okazaki Y."/>
            <person name="Orlando V."/>
            <person name="Pang K.C."/>
            <person name="Pavan W.J."/>
            <person name="Pavesi G."/>
            <person name="Pesole G."/>
            <person name="Petrovsky N."/>
            <person name="Piazza S."/>
            <person name="Reed J."/>
            <person name="Reid J.F."/>
            <person name="Ring B.Z."/>
            <person name="Ringwald M."/>
            <person name="Rost B."/>
            <person name="Ruan Y."/>
            <person name="Salzberg S.L."/>
            <person name="Sandelin A."/>
            <person name="Schneider C."/>
            <person name="Schoenbach C."/>
            <person name="Sekiguchi K."/>
            <person name="Semple C.A."/>
            <person name="Seno S."/>
            <person name="Sessa L."/>
            <person name="Sheng Y."/>
            <person name="Shibata Y."/>
            <person name="Shimada H."/>
            <person name="Shimada K."/>
            <person name="Silva D."/>
            <person name="Sinclair B."/>
            <person name="Sperling S."/>
            <person name="Stupka E."/>
            <person name="Sugiura K."/>
            <person name="Sultana R."/>
            <person name="Takenaka Y."/>
            <person name="Taki K."/>
            <person name="Tammoja K."/>
            <person name="Tan S.L."/>
            <person name="Tang S."/>
            <person name="Taylor M.S."/>
            <person name="Tegner J."/>
            <person name="Teichmann S.A."/>
            <person name="Ueda H.R."/>
            <person name="van Nimwegen E."/>
            <person name="Verardo R."/>
            <person name="Wei C.L."/>
            <person name="Yagi K."/>
            <person name="Yamanishi H."/>
            <person name="Zabarovsky E."/>
            <person name="Zhu S."/>
            <person name="Zimmer A."/>
            <person name="Hide W."/>
            <person name="Bult C."/>
            <person name="Grimmond S.M."/>
            <person name="Teasdale R.D."/>
            <person name="Liu E.T."/>
            <person name="Brusic V."/>
            <person name="Quackenbush J."/>
            <person name="Wahlestedt C."/>
            <person name="Mattick J.S."/>
            <person name="Hume D.A."/>
            <person name="Kai C."/>
            <person name="Sasaki D."/>
            <person name="Tomaru Y."/>
            <person name="Fukuda S."/>
            <person name="Kanamori-Katayama M."/>
            <person name="Suzuki M."/>
            <person name="Aoki J."/>
            <person name="Arakawa T."/>
            <person name="Iida J."/>
            <person name="Imamura K."/>
            <person name="Itoh M."/>
            <person name="Kato T."/>
            <person name="Kawaji H."/>
            <person name="Kawagashira N."/>
            <person name="Kawashima T."/>
            <person name="Kojima M."/>
            <person name="Kondo S."/>
            <person name="Konno H."/>
            <person name="Nakano K."/>
            <person name="Ninomiya N."/>
            <person name="Nishio T."/>
            <person name="Okada M."/>
            <person name="Plessy C."/>
            <person name="Shibata K."/>
            <person name="Shiraki T."/>
            <person name="Suzuki S."/>
            <person name="Tagami M."/>
            <person name="Waki K."/>
            <person name="Watahiki A."/>
            <person name="Okamura-Oho Y."/>
            <person name="Suzuki H."/>
            <person name="Kawai J."/>
            <person name="Hayashizaki Y."/>
        </authorList>
    </citation>
    <scope>NUCLEOTIDE SEQUENCE [LARGE SCALE MRNA] (ISOFORM 2)</scope>
    <source>
        <strain>C57BL/6J</strain>
        <tissue>Placenta</tissue>
    </source>
</reference>
<reference key="3">
    <citation type="journal article" date="2004" name="Genome Res.">
        <title>The status, quality, and expansion of the NIH full-length cDNA project: the Mammalian Gene Collection (MGC).</title>
        <authorList>
            <consortium name="The MGC Project Team"/>
        </authorList>
    </citation>
    <scope>NUCLEOTIDE SEQUENCE [LARGE SCALE MRNA] (ISOFORM 2)</scope>
    <source>
        <tissue>Brain</tissue>
        <tissue>Placenta</tissue>
    </source>
</reference>
<sequence>MPSDRRPSQRRNRSKSRDYRGARSKVTRADTRNRDDTLALSMYQGPPSADQGNNMADAPRFGFWTSVSQCLQYLWARRHLGLLLLLFWTLVILFRPVNTAKLPILAEAAELEPPLGNMLDFFFPTACIIRDNQVVVACNNQPYLSESECLKSKCCSSTSGTIIKCYAPVRDKPTQVLRVFGLAAISILVLGFLPMCCCSMCWRRKRMNRMLKVLKKQKSKGKKPKGRKASEERALLSH</sequence>
<gene>
    <name evidence="6" type="primary">Fmr1nb</name>
</gene>